<reference key="1">
    <citation type="journal article" date="2002" name="Nat. Biotechnol.">
        <title>Genome sequence of the dissimilatory metal ion-reducing bacterium Shewanella oneidensis.</title>
        <authorList>
            <person name="Heidelberg J.F."/>
            <person name="Paulsen I.T."/>
            <person name="Nelson K.E."/>
            <person name="Gaidos E.J."/>
            <person name="Nelson W.C."/>
            <person name="Read T.D."/>
            <person name="Eisen J.A."/>
            <person name="Seshadri R."/>
            <person name="Ward N.L."/>
            <person name="Methe B.A."/>
            <person name="Clayton R.A."/>
            <person name="Meyer T."/>
            <person name="Tsapin A."/>
            <person name="Scott J."/>
            <person name="Beanan M.J."/>
            <person name="Brinkac L.M."/>
            <person name="Daugherty S.C."/>
            <person name="DeBoy R.T."/>
            <person name="Dodson R.J."/>
            <person name="Durkin A.S."/>
            <person name="Haft D.H."/>
            <person name="Kolonay J.F."/>
            <person name="Madupu R."/>
            <person name="Peterson J.D."/>
            <person name="Umayam L.A."/>
            <person name="White O."/>
            <person name="Wolf A.M."/>
            <person name="Vamathevan J.J."/>
            <person name="Weidman J.F."/>
            <person name="Impraim M."/>
            <person name="Lee K."/>
            <person name="Berry K.J."/>
            <person name="Lee C."/>
            <person name="Mueller J."/>
            <person name="Khouri H.M."/>
            <person name="Gill J."/>
            <person name="Utterback T.R."/>
            <person name="McDonald L.A."/>
            <person name="Feldblyum T.V."/>
            <person name="Smith H.O."/>
            <person name="Venter J.C."/>
            <person name="Nealson K.H."/>
            <person name="Fraser C.M."/>
        </authorList>
    </citation>
    <scope>NUCLEOTIDE SEQUENCE [LARGE SCALE GENOMIC DNA]</scope>
    <source>
        <strain>ATCC 700550 / JCM 31522 / CIP 106686 / LMG 19005 / NCIMB 14063 / MR-1</strain>
    </source>
</reference>
<organism>
    <name type="scientific">Shewanella oneidensis (strain ATCC 700550 / JCM 31522 / CIP 106686 / LMG 19005 / NCIMB 14063 / MR-1)</name>
    <dbReference type="NCBI Taxonomy" id="211586"/>
    <lineage>
        <taxon>Bacteria</taxon>
        <taxon>Pseudomonadati</taxon>
        <taxon>Pseudomonadota</taxon>
        <taxon>Gammaproteobacteria</taxon>
        <taxon>Alteromonadales</taxon>
        <taxon>Shewanellaceae</taxon>
        <taxon>Shewanella</taxon>
    </lineage>
</organism>
<gene>
    <name evidence="1" type="primary">hisI</name>
    <name evidence="1" type="synonym">hisIE</name>
    <name type="ordered locus">SO_2067</name>
</gene>
<keyword id="KW-0028">Amino-acid biosynthesis</keyword>
<keyword id="KW-0067">ATP-binding</keyword>
<keyword id="KW-0963">Cytoplasm</keyword>
<keyword id="KW-0368">Histidine biosynthesis</keyword>
<keyword id="KW-0378">Hydrolase</keyword>
<keyword id="KW-0511">Multifunctional enzyme</keyword>
<keyword id="KW-0547">Nucleotide-binding</keyword>
<keyword id="KW-1185">Reference proteome</keyword>
<dbReference type="EC" id="3.5.4.19" evidence="1"/>
<dbReference type="EC" id="3.6.1.31" evidence="1"/>
<dbReference type="EMBL" id="AE014299">
    <property type="protein sequence ID" value="AAN55114.1"/>
    <property type="molecule type" value="Genomic_DNA"/>
</dbReference>
<dbReference type="RefSeq" id="NP_717670.1">
    <property type="nucleotide sequence ID" value="NC_004347.2"/>
</dbReference>
<dbReference type="RefSeq" id="WP_011072134.1">
    <property type="nucleotide sequence ID" value="NC_004347.2"/>
</dbReference>
<dbReference type="SMR" id="Q8EFB6"/>
<dbReference type="STRING" id="211586.SO_2067"/>
<dbReference type="PaxDb" id="211586-SO_2067"/>
<dbReference type="KEGG" id="son:SO_2067"/>
<dbReference type="PATRIC" id="fig|211586.12.peg.1985"/>
<dbReference type="eggNOG" id="COG0139">
    <property type="taxonomic scope" value="Bacteria"/>
</dbReference>
<dbReference type="eggNOG" id="COG0140">
    <property type="taxonomic scope" value="Bacteria"/>
</dbReference>
<dbReference type="HOGENOM" id="CLU_048577_3_1_6"/>
<dbReference type="OrthoDB" id="9795769at2"/>
<dbReference type="PhylomeDB" id="Q8EFB6"/>
<dbReference type="BioCyc" id="SONE211586:G1GMP-1900-MONOMER"/>
<dbReference type="UniPathway" id="UPA00031">
    <property type="reaction ID" value="UER00007"/>
</dbReference>
<dbReference type="UniPathway" id="UPA00031">
    <property type="reaction ID" value="UER00008"/>
</dbReference>
<dbReference type="Proteomes" id="UP000008186">
    <property type="component" value="Chromosome"/>
</dbReference>
<dbReference type="GO" id="GO:0005737">
    <property type="term" value="C:cytoplasm"/>
    <property type="evidence" value="ECO:0007669"/>
    <property type="project" value="UniProtKB-SubCell"/>
</dbReference>
<dbReference type="GO" id="GO:0005524">
    <property type="term" value="F:ATP binding"/>
    <property type="evidence" value="ECO:0007669"/>
    <property type="project" value="UniProtKB-KW"/>
</dbReference>
<dbReference type="GO" id="GO:0004635">
    <property type="term" value="F:phosphoribosyl-AMP cyclohydrolase activity"/>
    <property type="evidence" value="ECO:0007669"/>
    <property type="project" value="UniProtKB-UniRule"/>
</dbReference>
<dbReference type="GO" id="GO:0004636">
    <property type="term" value="F:phosphoribosyl-ATP diphosphatase activity"/>
    <property type="evidence" value="ECO:0007669"/>
    <property type="project" value="UniProtKB-UniRule"/>
</dbReference>
<dbReference type="GO" id="GO:0000105">
    <property type="term" value="P:L-histidine biosynthetic process"/>
    <property type="evidence" value="ECO:0007669"/>
    <property type="project" value="UniProtKB-UniRule"/>
</dbReference>
<dbReference type="CDD" id="cd11534">
    <property type="entry name" value="NTP-PPase_HisIE_like"/>
    <property type="match status" value="1"/>
</dbReference>
<dbReference type="FunFam" id="1.10.287.1080:FF:000002">
    <property type="entry name" value="Histidine biosynthesis bifunctional protein HisIE"/>
    <property type="match status" value="1"/>
</dbReference>
<dbReference type="FunFam" id="3.10.20.810:FF:000001">
    <property type="entry name" value="Histidine biosynthesis bifunctional protein HisIE"/>
    <property type="match status" value="1"/>
</dbReference>
<dbReference type="Gene3D" id="1.10.287.1080">
    <property type="entry name" value="MazG-like"/>
    <property type="match status" value="1"/>
</dbReference>
<dbReference type="Gene3D" id="3.10.20.810">
    <property type="entry name" value="Phosphoribosyl-AMP cyclohydrolase"/>
    <property type="match status" value="1"/>
</dbReference>
<dbReference type="HAMAP" id="MF_01020">
    <property type="entry name" value="HisE"/>
    <property type="match status" value="1"/>
</dbReference>
<dbReference type="HAMAP" id="MF_01019">
    <property type="entry name" value="HisIE"/>
    <property type="match status" value="1"/>
</dbReference>
<dbReference type="InterPro" id="IPR023019">
    <property type="entry name" value="His_synth_HisIE"/>
</dbReference>
<dbReference type="InterPro" id="IPR008179">
    <property type="entry name" value="HisE"/>
</dbReference>
<dbReference type="InterPro" id="IPR021130">
    <property type="entry name" value="PRib-ATP_PPHydrolase-like"/>
</dbReference>
<dbReference type="InterPro" id="IPR002496">
    <property type="entry name" value="PRib_AMP_CycHydrolase_dom"/>
</dbReference>
<dbReference type="InterPro" id="IPR038019">
    <property type="entry name" value="PRib_AMP_CycHydrolase_sf"/>
</dbReference>
<dbReference type="NCBIfam" id="TIGR03188">
    <property type="entry name" value="histidine_hisI"/>
    <property type="match status" value="1"/>
</dbReference>
<dbReference type="NCBIfam" id="NF000768">
    <property type="entry name" value="PRK00051.1"/>
    <property type="match status" value="1"/>
</dbReference>
<dbReference type="NCBIfam" id="NF002747">
    <property type="entry name" value="PRK02759.1"/>
    <property type="match status" value="1"/>
</dbReference>
<dbReference type="PANTHER" id="PTHR42945">
    <property type="entry name" value="HISTIDINE BIOSYNTHESIS BIFUNCTIONAL PROTEIN"/>
    <property type="match status" value="1"/>
</dbReference>
<dbReference type="PANTHER" id="PTHR42945:SF9">
    <property type="entry name" value="HISTIDINE BIOSYNTHESIS BIFUNCTIONAL PROTEIN HISIE"/>
    <property type="match status" value="1"/>
</dbReference>
<dbReference type="Pfam" id="PF01502">
    <property type="entry name" value="PRA-CH"/>
    <property type="match status" value="1"/>
</dbReference>
<dbReference type="Pfam" id="PF01503">
    <property type="entry name" value="PRA-PH"/>
    <property type="match status" value="1"/>
</dbReference>
<dbReference type="SUPFAM" id="SSF101386">
    <property type="entry name" value="all-alpha NTP pyrophosphatases"/>
    <property type="match status" value="1"/>
</dbReference>
<dbReference type="SUPFAM" id="SSF141734">
    <property type="entry name" value="HisI-like"/>
    <property type="match status" value="1"/>
</dbReference>
<sequence>MSTQTNTKSDFSELDWDKQDGLIPAVIQNHLSGKVLMLGYMDKAALEQTLATGDVTFFSRSKQRLWTKGETSGHTLKLVAIDKDCDNDSLLVQVLPNGPTCHKGTESCWLDGNAHPFLNNLAELIASRKGQSPESSYTASLFARGTKRIAQKVGEEGLETALAAATHDKEELVNEASDLMYHLLVLLEDQALSLSDITANLLARHQKAQRK</sequence>
<evidence type="ECO:0000255" key="1">
    <source>
        <dbReference type="HAMAP-Rule" id="MF_01019"/>
    </source>
</evidence>
<accession>Q8EFB6</accession>
<feature type="chain" id="PRO_0000136428" description="Histidine biosynthesis bifunctional protein HisIE">
    <location>
        <begin position="1"/>
        <end position="211"/>
    </location>
</feature>
<feature type="region of interest" description="Phosphoribosyl-AMP cyclohydrolase">
    <location>
        <begin position="1"/>
        <end position="117"/>
    </location>
</feature>
<feature type="region of interest" description="Phosphoribosyl-ATP pyrophosphohydrolase">
    <location>
        <begin position="118"/>
        <end position="211"/>
    </location>
</feature>
<proteinExistence type="inferred from homology"/>
<protein>
    <recommendedName>
        <fullName evidence="1">Histidine biosynthesis bifunctional protein HisIE</fullName>
    </recommendedName>
    <domain>
        <recommendedName>
            <fullName evidence="1">Phosphoribosyl-AMP cyclohydrolase</fullName>
            <shortName evidence="1">PRA-CH</shortName>
            <ecNumber evidence="1">3.5.4.19</ecNumber>
        </recommendedName>
    </domain>
    <domain>
        <recommendedName>
            <fullName evidence="1">Phosphoribosyl-ATP pyrophosphatase</fullName>
            <shortName evidence="1">PRA-PH</shortName>
            <ecNumber evidence="1">3.6.1.31</ecNumber>
        </recommendedName>
    </domain>
</protein>
<name>HIS2_SHEON</name>
<comment type="catalytic activity">
    <reaction evidence="1">
        <text>1-(5-phospho-beta-D-ribosyl)-ATP + H2O = 1-(5-phospho-beta-D-ribosyl)-5'-AMP + diphosphate + H(+)</text>
        <dbReference type="Rhea" id="RHEA:22828"/>
        <dbReference type="ChEBI" id="CHEBI:15377"/>
        <dbReference type="ChEBI" id="CHEBI:15378"/>
        <dbReference type="ChEBI" id="CHEBI:33019"/>
        <dbReference type="ChEBI" id="CHEBI:59457"/>
        <dbReference type="ChEBI" id="CHEBI:73183"/>
        <dbReference type="EC" id="3.6.1.31"/>
    </reaction>
</comment>
<comment type="catalytic activity">
    <reaction evidence="1">
        <text>1-(5-phospho-beta-D-ribosyl)-5'-AMP + H2O = 1-(5-phospho-beta-D-ribosyl)-5-[(5-phospho-beta-D-ribosylamino)methylideneamino]imidazole-4-carboxamide</text>
        <dbReference type="Rhea" id="RHEA:20049"/>
        <dbReference type="ChEBI" id="CHEBI:15377"/>
        <dbReference type="ChEBI" id="CHEBI:58435"/>
        <dbReference type="ChEBI" id="CHEBI:59457"/>
        <dbReference type="EC" id="3.5.4.19"/>
    </reaction>
</comment>
<comment type="pathway">
    <text evidence="1">Amino-acid biosynthesis; L-histidine biosynthesis; L-histidine from 5-phospho-alpha-D-ribose 1-diphosphate: step 2/9.</text>
</comment>
<comment type="pathway">
    <text evidence="1">Amino-acid biosynthesis; L-histidine biosynthesis; L-histidine from 5-phospho-alpha-D-ribose 1-diphosphate: step 3/9.</text>
</comment>
<comment type="subcellular location">
    <subcellularLocation>
        <location evidence="1">Cytoplasm</location>
    </subcellularLocation>
</comment>
<comment type="similarity">
    <text evidence="1">In the N-terminal section; belongs to the PRA-CH family.</text>
</comment>
<comment type="similarity">
    <text evidence="1">In the C-terminal section; belongs to the PRA-PH family.</text>
</comment>